<comment type="function">
    <text evidence="1">Catalyzes the synthesis of 5,6-dihydrouridine (D), a modified base found in the D-loop of most tRNAs, via the reduction of the C5-C6 double bond in target uridines.</text>
</comment>
<comment type="catalytic activity">
    <reaction evidence="1">
        <text>a 5,6-dihydrouridine in tRNA + NAD(+) = a uridine in tRNA + NADH + H(+)</text>
        <dbReference type="Rhea" id="RHEA:54452"/>
        <dbReference type="Rhea" id="RHEA-COMP:13339"/>
        <dbReference type="Rhea" id="RHEA-COMP:13887"/>
        <dbReference type="ChEBI" id="CHEBI:15378"/>
        <dbReference type="ChEBI" id="CHEBI:57540"/>
        <dbReference type="ChEBI" id="CHEBI:57945"/>
        <dbReference type="ChEBI" id="CHEBI:65315"/>
        <dbReference type="ChEBI" id="CHEBI:74443"/>
    </reaction>
</comment>
<comment type="catalytic activity">
    <reaction evidence="1">
        <text>a 5,6-dihydrouridine in tRNA + NADP(+) = a uridine in tRNA + NADPH + H(+)</text>
        <dbReference type="Rhea" id="RHEA:23624"/>
        <dbReference type="Rhea" id="RHEA-COMP:13339"/>
        <dbReference type="Rhea" id="RHEA-COMP:13887"/>
        <dbReference type="ChEBI" id="CHEBI:15378"/>
        <dbReference type="ChEBI" id="CHEBI:57783"/>
        <dbReference type="ChEBI" id="CHEBI:58349"/>
        <dbReference type="ChEBI" id="CHEBI:65315"/>
        <dbReference type="ChEBI" id="CHEBI:74443"/>
    </reaction>
</comment>
<comment type="cofactor">
    <cofactor evidence="1">
        <name>FMN</name>
        <dbReference type="ChEBI" id="CHEBI:58210"/>
    </cofactor>
</comment>
<comment type="similarity">
    <text evidence="3">Belongs to the Dus family.</text>
</comment>
<comment type="caution">
    <text evidence="4">Was originally thought to be involved in the activation of nitrogen assimilatory genes.</text>
</comment>
<feature type="chain" id="PRO_0000162139" description="Probable tRNA-dihydrouridine synthase">
    <location>
        <begin position="1"/>
        <end position="324"/>
    </location>
</feature>
<feature type="active site" description="Proton donor" evidence="2">
    <location>
        <position position="103"/>
    </location>
</feature>
<feature type="binding site" evidence="1">
    <location>
        <begin position="18"/>
        <end position="20"/>
    </location>
    <ligand>
        <name>FMN</name>
        <dbReference type="ChEBI" id="CHEBI:58210"/>
    </ligand>
</feature>
<feature type="binding site" evidence="1">
    <location>
        <position position="73"/>
    </location>
    <ligand>
        <name>FMN</name>
        <dbReference type="ChEBI" id="CHEBI:58210"/>
    </ligand>
</feature>
<feature type="binding site" evidence="1">
    <location>
        <position position="142"/>
    </location>
    <ligand>
        <name>FMN</name>
        <dbReference type="ChEBI" id="CHEBI:58210"/>
    </ligand>
</feature>
<feature type="binding site" evidence="1">
    <location>
        <begin position="203"/>
        <end position="205"/>
    </location>
    <ligand>
        <name>FMN</name>
        <dbReference type="ChEBI" id="CHEBI:58210"/>
    </ligand>
</feature>
<feature type="binding site" evidence="1">
    <location>
        <begin position="227"/>
        <end position="228"/>
    </location>
    <ligand>
        <name>FMN</name>
        <dbReference type="ChEBI" id="CHEBI:58210"/>
    </ligand>
</feature>
<organism>
    <name type="scientific">Rhodobacter capsulatus (strain ATCC BAA-309 / NBRC 16581 / SB1003)</name>
    <dbReference type="NCBI Taxonomy" id="272942"/>
    <lineage>
        <taxon>Bacteria</taxon>
        <taxon>Pseudomonadati</taxon>
        <taxon>Pseudomonadota</taxon>
        <taxon>Alphaproteobacteria</taxon>
        <taxon>Rhodobacterales</taxon>
        <taxon>Rhodobacter group</taxon>
        <taxon>Rhodobacter</taxon>
    </lineage>
</organism>
<sequence length="324" mass="33939">MTISLDSLRLDPPVLLAPMAGITDLPFRRMVARFGAGLVVSEMVASGEMLTAKPSVRAKAQAELTAGLPTSVQLAGREAAPMAEAAKIVADMGAEIIDINMGCPAKKVTGGLSGAALMRNPDHALRLIEAVVGAVDLPVTLKMRLGWDEDQLNAAEIAARAEAAGVKMIVIHGRTRMQFYTGAADWRAIAAVRAAVSVPVVANGDITDAASARRALDQSGAAGVMVGRGAQGAPWRLAQIAAALFGKADPKLPSGSEFSDFVSEHYEAILSFYGRDLGLRIARKHLGWYAEAAAAPLRAEMMRATDPAATLALIRSAFSEREAA</sequence>
<keyword id="KW-0285">Flavoprotein</keyword>
<keyword id="KW-0288">FMN</keyword>
<keyword id="KW-0521">NADP</keyword>
<keyword id="KW-0560">Oxidoreductase</keyword>
<keyword id="KW-1185">Reference proteome</keyword>
<keyword id="KW-0694">RNA-binding</keyword>
<keyword id="KW-0819">tRNA processing</keyword>
<keyword id="KW-0820">tRNA-binding</keyword>
<name>DUS_RHOCB</name>
<dbReference type="EC" id="1.3.1.-"/>
<dbReference type="EMBL" id="X72382">
    <property type="protein sequence ID" value="CAA51073.1"/>
    <property type="molecule type" value="Genomic_DNA"/>
</dbReference>
<dbReference type="EMBL" id="CP001312">
    <property type="protein sequence ID" value="ADE85541.1"/>
    <property type="molecule type" value="Genomic_DNA"/>
</dbReference>
<dbReference type="PIR" id="S34981">
    <property type="entry name" value="S34981"/>
</dbReference>
<dbReference type="RefSeq" id="WP_013067520.1">
    <property type="nucleotide sequence ID" value="NC_014034.1"/>
</dbReference>
<dbReference type="SMR" id="Q08111"/>
<dbReference type="STRING" id="272942.RCAP_rcc01796"/>
<dbReference type="GeneID" id="31490671"/>
<dbReference type="KEGG" id="rcp:RCAP_rcc01796"/>
<dbReference type="eggNOG" id="COG0042">
    <property type="taxonomic scope" value="Bacteria"/>
</dbReference>
<dbReference type="HOGENOM" id="CLU_013299_0_1_5"/>
<dbReference type="OrthoDB" id="9764501at2"/>
<dbReference type="Proteomes" id="UP000002361">
    <property type="component" value="Chromosome"/>
</dbReference>
<dbReference type="GO" id="GO:0050660">
    <property type="term" value="F:flavin adenine dinucleotide binding"/>
    <property type="evidence" value="ECO:0007669"/>
    <property type="project" value="InterPro"/>
</dbReference>
<dbReference type="GO" id="GO:0000049">
    <property type="term" value="F:tRNA binding"/>
    <property type="evidence" value="ECO:0007669"/>
    <property type="project" value="UniProtKB-KW"/>
</dbReference>
<dbReference type="GO" id="GO:0017150">
    <property type="term" value="F:tRNA dihydrouridine synthase activity"/>
    <property type="evidence" value="ECO:0007669"/>
    <property type="project" value="InterPro"/>
</dbReference>
<dbReference type="CDD" id="cd02801">
    <property type="entry name" value="DUS_like_FMN"/>
    <property type="match status" value="1"/>
</dbReference>
<dbReference type="Gene3D" id="3.20.20.70">
    <property type="entry name" value="Aldolase class I"/>
    <property type="match status" value="1"/>
</dbReference>
<dbReference type="Gene3D" id="1.10.1200.80">
    <property type="entry name" value="Putative flavin oxidoreducatase, domain 2"/>
    <property type="match status" value="1"/>
</dbReference>
<dbReference type="InterPro" id="IPR013785">
    <property type="entry name" value="Aldolase_TIM"/>
</dbReference>
<dbReference type="InterPro" id="IPR035587">
    <property type="entry name" value="DUS-like_FMN-bd"/>
</dbReference>
<dbReference type="InterPro" id="IPR001269">
    <property type="entry name" value="DUS_fam"/>
</dbReference>
<dbReference type="InterPro" id="IPR004652">
    <property type="entry name" value="DusB-like"/>
</dbReference>
<dbReference type="InterPro" id="IPR024036">
    <property type="entry name" value="tRNA-dHydroUridine_Synthase_C"/>
</dbReference>
<dbReference type="InterPro" id="IPR018517">
    <property type="entry name" value="tRNA_hU_synthase_CS"/>
</dbReference>
<dbReference type="NCBIfam" id="TIGR00737">
    <property type="entry name" value="nifR3_yhdG"/>
    <property type="match status" value="1"/>
</dbReference>
<dbReference type="PANTHER" id="PTHR45846">
    <property type="entry name" value="TRNA-DIHYDROURIDINE(47) SYNTHASE [NAD(P)(+)]-LIKE"/>
    <property type="match status" value="1"/>
</dbReference>
<dbReference type="PANTHER" id="PTHR45846:SF1">
    <property type="entry name" value="TRNA-DIHYDROURIDINE(47) SYNTHASE [NAD(P)(+)]-LIKE"/>
    <property type="match status" value="1"/>
</dbReference>
<dbReference type="Pfam" id="PF01207">
    <property type="entry name" value="Dus"/>
    <property type="match status" value="1"/>
</dbReference>
<dbReference type="PIRSF" id="PIRSF006621">
    <property type="entry name" value="Dus"/>
    <property type="match status" value="1"/>
</dbReference>
<dbReference type="SUPFAM" id="SSF51395">
    <property type="entry name" value="FMN-linked oxidoreductases"/>
    <property type="match status" value="1"/>
</dbReference>
<dbReference type="PROSITE" id="PS01136">
    <property type="entry name" value="UPF0034"/>
    <property type="match status" value="1"/>
</dbReference>
<proteinExistence type="inferred from homology"/>
<protein>
    <recommendedName>
        <fullName>Probable tRNA-dihydrouridine synthase</fullName>
        <ecNumber>1.3.1.-</ecNumber>
    </recommendedName>
    <alternativeName>
        <fullName>Nitrogen regulation protein nifR3</fullName>
    </alternativeName>
</protein>
<accession>Q08111</accession>
<accession>D5AUA2</accession>
<evidence type="ECO:0000250" key="1">
    <source>
        <dbReference type="UniProtKB" id="P33371"/>
    </source>
</evidence>
<evidence type="ECO:0000250" key="2">
    <source>
        <dbReference type="UniProtKB" id="Q5SMC7"/>
    </source>
</evidence>
<evidence type="ECO:0000305" key="3"/>
<evidence type="ECO:0000305" key="4">
    <source>
    </source>
</evidence>
<reference key="1">
    <citation type="journal article" date="1993" name="Mol. Microbiol.">
        <title>Sequence, genetic, and lacZ fusion analyses of a nifR3-ntrB-ntrC operon in Rhodobacter capsulatus.</title>
        <authorList>
            <person name="Foster-Hartnett D."/>
            <person name="Cullen P.J."/>
            <person name="Gabbert K.K."/>
            <person name="Kranz R.G."/>
        </authorList>
    </citation>
    <scope>NUCLEOTIDE SEQUENCE [GENOMIC DNA]</scope>
    <source>
        <strain>ATCC BAA-309 / NBRC 16581 / SB1003</strain>
    </source>
</reference>
<reference key="2">
    <citation type="journal article" date="2010" name="J. Bacteriol.">
        <title>Complete genome sequence of the photosynthetic purple nonsulfur bacterium Rhodobacter capsulatus SB 1003.</title>
        <authorList>
            <person name="Strnad H."/>
            <person name="Lapidus A."/>
            <person name="Paces J."/>
            <person name="Ulbrich P."/>
            <person name="Vlcek C."/>
            <person name="Paces V."/>
            <person name="Haselkorn R."/>
        </authorList>
    </citation>
    <scope>NUCLEOTIDE SEQUENCE [LARGE SCALE GENOMIC DNA]</scope>
    <source>
        <strain>ATCC BAA-309 / NBRC 16581 / SB1003</strain>
    </source>
</reference>
<gene>
    <name type="primary">dus</name>
    <name type="synonym">dusB</name>
    <name type="synonym">nifR3</name>
    <name type="ordered locus">RCAP_rcc01796</name>
</gene>